<gene>
    <name evidence="1" type="primary">purA</name>
</gene>
<reference key="1">
    <citation type="journal article" date="2002" name="Infect. Immun.">
        <title>Macrophage-induced genes of Legionella pneumophila: protection from reactive intermediates and solute imbalance during intracellular growth.</title>
        <authorList>
            <person name="Rankin S."/>
            <person name="Li Z."/>
            <person name="Isberg R.R."/>
        </authorList>
    </citation>
    <scope>NUCLEOTIDE SEQUENCE [GENOMIC DNA]</scope>
</reference>
<evidence type="ECO:0000255" key="1">
    <source>
        <dbReference type="HAMAP-Rule" id="MF_00011"/>
    </source>
</evidence>
<evidence type="ECO:0007829" key="2">
    <source>
        <dbReference type="PDB" id="6C25"/>
    </source>
</evidence>
<comment type="function">
    <text evidence="1">Plays an important role in the de novo pathway of purine nucleotide biosynthesis. Catalyzes the first committed step in the biosynthesis of AMP from IMP.</text>
</comment>
<comment type="catalytic activity">
    <reaction evidence="1">
        <text>IMP + L-aspartate + GTP = N(6)-(1,2-dicarboxyethyl)-AMP + GDP + phosphate + 2 H(+)</text>
        <dbReference type="Rhea" id="RHEA:15753"/>
        <dbReference type="ChEBI" id="CHEBI:15378"/>
        <dbReference type="ChEBI" id="CHEBI:29991"/>
        <dbReference type="ChEBI" id="CHEBI:37565"/>
        <dbReference type="ChEBI" id="CHEBI:43474"/>
        <dbReference type="ChEBI" id="CHEBI:57567"/>
        <dbReference type="ChEBI" id="CHEBI:58053"/>
        <dbReference type="ChEBI" id="CHEBI:58189"/>
        <dbReference type="EC" id="6.3.4.4"/>
    </reaction>
</comment>
<comment type="cofactor">
    <cofactor evidence="1">
        <name>Mg(2+)</name>
        <dbReference type="ChEBI" id="CHEBI:18420"/>
    </cofactor>
    <text evidence="1">Binds 1 Mg(2+) ion per subunit.</text>
</comment>
<comment type="pathway">
    <text evidence="1">Purine metabolism; AMP biosynthesis via de novo pathway; AMP from IMP: step 1/2.</text>
</comment>
<comment type="subunit">
    <text evidence="1">Homodimer.</text>
</comment>
<comment type="subcellular location">
    <subcellularLocation>
        <location evidence="1">Cytoplasm</location>
    </subcellularLocation>
</comment>
<comment type="similarity">
    <text evidence="1">Belongs to the adenylosuccinate synthetase family.</text>
</comment>
<keyword id="KW-0002">3D-structure</keyword>
<keyword id="KW-0963">Cytoplasm</keyword>
<keyword id="KW-0342">GTP-binding</keyword>
<keyword id="KW-0436">Ligase</keyword>
<keyword id="KW-0460">Magnesium</keyword>
<keyword id="KW-0479">Metal-binding</keyword>
<keyword id="KW-0547">Nucleotide-binding</keyword>
<keyword id="KW-0658">Purine biosynthesis</keyword>
<accession>Q8RNM2</accession>
<organism>
    <name type="scientific">Legionella pneumophila</name>
    <dbReference type="NCBI Taxonomy" id="446"/>
    <lineage>
        <taxon>Bacteria</taxon>
        <taxon>Pseudomonadati</taxon>
        <taxon>Pseudomonadota</taxon>
        <taxon>Gammaproteobacteria</taxon>
        <taxon>Legionellales</taxon>
        <taxon>Legionellaceae</taxon>
        <taxon>Legionella</taxon>
    </lineage>
</organism>
<protein>
    <recommendedName>
        <fullName evidence="1">Adenylosuccinate synthetase</fullName>
        <shortName evidence="1">AMPSase</shortName>
        <shortName evidence="1">AdSS</shortName>
        <ecNumber evidence="1">6.3.4.4</ecNumber>
    </recommendedName>
    <alternativeName>
        <fullName evidence="1">IMP--aspartate ligase</fullName>
    </alternativeName>
</protein>
<feature type="chain" id="PRO_0000095190" description="Adenylosuccinate synthetase">
    <location>
        <begin position="1"/>
        <end position="431"/>
    </location>
</feature>
<feature type="active site" description="Proton acceptor" evidence="1">
    <location>
        <position position="14"/>
    </location>
</feature>
<feature type="active site" description="Proton donor" evidence="1">
    <location>
        <position position="42"/>
    </location>
</feature>
<feature type="binding site" evidence="1">
    <location>
        <begin position="13"/>
        <end position="19"/>
    </location>
    <ligand>
        <name>GTP</name>
        <dbReference type="ChEBI" id="CHEBI:37565"/>
    </ligand>
</feature>
<feature type="binding site" description="in other chain" evidence="1">
    <location>
        <begin position="14"/>
        <end position="17"/>
    </location>
    <ligand>
        <name>IMP</name>
        <dbReference type="ChEBI" id="CHEBI:58053"/>
        <note>ligand shared between dimeric partners</note>
    </ligand>
</feature>
<feature type="binding site" evidence="1">
    <location>
        <position position="14"/>
    </location>
    <ligand>
        <name>Mg(2+)</name>
        <dbReference type="ChEBI" id="CHEBI:18420"/>
    </ligand>
</feature>
<feature type="binding site" description="in other chain" evidence="1">
    <location>
        <begin position="39"/>
        <end position="42"/>
    </location>
    <ligand>
        <name>IMP</name>
        <dbReference type="ChEBI" id="CHEBI:58053"/>
        <note>ligand shared between dimeric partners</note>
    </ligand>
</feature>
<feature type="binding site" evidence="1">
    <location>
        <begin position="41"/>
        <end position="43"/>
    </location>
    <ligand>
        <name>GTP</name>
        <dbReference type="ChEBI" id="CHEBI:37565"/>
    </ligand>
</feature>
<feature type="binding site" evidence="1">
    <location>
        <position position="41"/>
    </location>
    <ligand>
        <name>Mg(2+)</name>
        <dbReference type="ChEBI" id="CHEBI:18420"/>
    </ligand>
</feature>
<feature type="binding site" description="in other chain" evidence="1">
    <location>
        <position position="130"/>
    </location>
    <ligand>
        <name>IMP</name>
        <dbReference type="ChEBI" id="CHEBI:58053"/>
        <note>ligand shared between dimeric partners</note>
    </ligand>
</feature>
<feature type="binding site" evidence="1">
    <location>
        <position position="144"/>
    </location>
    <ligand>
        <name>IMP</name>
        <dbReference type="ChEBI" id="CHEBI:58053"/>
        <note>ligand shared between dimeric partners</note>
    </ligand>
</feature>
<feature type="binding site" description="in other chain" evidence="1">
    <location>
        <position position="225"/>
    </location>
    <ligand>
        <name>IMP</name>
        <dbReference type="ChEBI" id="CHEBI:58053"/>
        <note>ligand shared between dimeric partners</note>
    </ligand>
</feature>
<feature type="binding site" description="in other chain" evidence="1">
    <location>
        <position position="240"/>
    </location>
    <ligand>
        <name>IMP</name>
        <dbReference type="ChEBI" id="CHEBI:58053"/>
        <note>ligand shared between dimeric partners</note>
    </ligand>
</feature>
<feature type="binding site" evidence="1">
    <location>
        <begin position="300"/>
        <end position="306"/>
    </location>
    <ligand>
        <name>substrate</name>
    </ligand>
</feature>
<feature type="binding site" description="in other chain" evidence="1">
    <location>
        <position position="304"/>
    </location>
    <ligand>
        <name>IMP</name>
        <dbReference type="ChEBI" id="CHEBI:58053"/>
        <note>ligand shared between dimeric partners</note>
    </ligand>
</feature>
<feature type="binding site" evidence="1">
    <location>
        <position position="306"/>
    </location>
    <ligand>
        <name>GTP</name>
        <dbReference type="ChEBI" id="CHEBI:37565"/>
    </ligand>
</feature>
<feature type="binding site" evidence="1">
    <location>
        <begin position="332"/>
        <end position="334"/>
    </location>
    <ligand>
        <name>GTP</name>
        <dbReference type="ChEBI" id="CHEBI:37565"/>
    </ligand>
</feature>
<feature type="binding site" evidence="1">
    <location>
        <begin position="415"/>
        <end position="417"/>
    </location>
    <ligand>
        <name>GTP</name>
        <dbReference type="ChEBI" id="CHEBI:37565"/>
    </ligand>
</feature>
<feature type="strand" evidence="2">
    <location>
        <begin position="4"/>
        <end position="13"/>
    </location>
</feature>
<feature type="helix" evidence="2">
    <location>
        <begin position="17"/>
        <end position="24"/>
    </location>
</feature>
<feature type="turn" evidence="2">
    <location>
        <begin position="25"/>
        <end position="27"/>
    </location>
</feature>
<feature type="strand" evidence="2">
    <location>
        <begin position="29"/>
        <end position="33"/>
    </location>
</feature>
<feature type="strand" evidence="2">
    <location>
        <begin position="38"/>
        <end position="40"/>
    </location>
</feature>
<feature type="strand" evidence="2">
    <location>
        <begin position="52"/>
        <end position="56"/>
    </location>
</feature>
<feature type="helix" evidence="2">
    <location>
        <begin position="58"/>
        <end position="61"/>
    </location>
</feature>
<feature type="strand" evidence="2">
    <location>
        <begin position="66"/>
        <end position="69"/>
    </location>
</feature>
<feature type="helix" evidence="2">
    <location>
        <begin position="77"/>
        <end position="89"/>
    </location>
</feature>
<feature type="helix" evidence="2">
    <location>
        <begin position="94"/>
        <end position="97"/>
    </location>
</feature>
<feature type="strand" evidence="2">
    <location>
        <begin position="98"/>
        <end position="101"/>
    </location>
</feature>
<feature type="helix" evidence="2">
    <location>
        <begin position="109"/>
        <end position="119"/>
    </location>
</feature>
<feature type="helix" evidence="2">
    <location>
        <begin position="134"/>
        <end position="142"/>
    </location>
</feature>
<feature type="helix" evidence="2">
    <location>
        <begin position="149"/>
        <end position="153"/>
    </location>
</feature>
<feature type="helix" evidence="2">
    <location>
        <begin position="155"/>
        <end position="174"/>
    </location>
</feature>
<feature type="helix" evidence="2">
    <location>
        <begin position="184"/>
        <end position="190"/>
    </location>
</feature>
<feature type="turn" evidence="2">
    <location>
        <begin position="191"/>
        <end position="193"/>
    </location>
</feature>
<feature type="helix" evidence="2">
    <location>
        <begin position="194"/>
        <end position="198"/>
    </location>
</feature>
<feature type="helix" evidence="2">
    <location>
        <begin position="199"/>
        <end position="201"/>
    </location>
</feature>
<feature type="helix" evidence="2">
    <location>
        <begin position="205"/>
        <end position="214"/>
    </location>
</feature>
<feature type="strand" evidence="2">
    <location>
        <begin position="219"/>
        <end position="222"/>
    </location>
</feature>
<feature type="helix" evidence="2">
    <location>
        <begin position="249"/>
        <end position="253"/>
    </location>
</feature>
<feature type="helix" evidence="2">
    <location>
        <begin position="257"/>
        <end position="259"/>
    </location>
</feature>
<feature type="strand" evidence="2">
    <location>
        <begin position="262"/>
        <end position="273"/>
    </location>
</feature>
<feature type="strand" evidence="2">
    <location>
        <begin position="275"/>
        <end position="277"/>
    </location>
</feature>
<feature type="helix" evidence="2">
    <location>
        <begin position="286"/>
        <end position="294"/>
    </location>
</feature>
<feature type="turn" evidence="2">
    <location>
        <begin position="300"/>
        <end position="302"/>
    </location>
</feature>
<feature type="strand" evidence="2">
    <location>
        <begin position="307"/>
        <end position="309"/>
    </location>
</feature>
<feature type="helix" evidence="2">
    <location>
        <begin position="313"/>
        <end position="323"/>
    </location>
</feature>
<feature type="strand" evidence="2">
    <location>
        <begin position="327"/>
        <end position="331"/>
    </location>
</feature>
<feature type="helix" evidence="2">
    <location>
        <begin position="333"/>
        <end position="336"/>
    </location>
</feature>
<feature type="strand" evidence="2">
    <location>
        <begin position="340"/>
        <end position="349"/>
    </location>
</feature>
<feature type="strand" evidence="2">
    <location>
        <begin position="355"/>
        <end position="358"/>
    </location>
</feature>
<feature type="helix" evidence="2">
    <location>
        <begin position="363"/>
        <end position="366"/>
    </location>
</feature>
<feature type="strand" evidence="2">
    <location>
        <begin position="370"/>
        <end position="377"/>
    </location>
</feature>
<feature type="helix" evidence="2">
    <location>
        <begin position="389"/>
        <end position="391"/>
    </location>
</feature>
<feature type="helix" evidence="2">
    <location>
        <begin position="394"/>
        <end position="407"/>
    </location>
</feature>
<feature type="strand" evidence="2">
    <location>
        <begin position="411"/>
        <end position="415"/>
    </location>
</feature>
<feature type="strand" evidence="2">
    <location>
        <begin position="417"/>
        <end position="419"/>
    </location>
</feature>
<feature type="strand" evidence="2">
    <location>
        <begin position="422"/>
        <end position="427"/>
    </location>
</feature>
<proteinExistence type="evidence at protein level"/>
<dbReference type="EC" id="6.3.4.4" evidence="1"/>
<dbReference type="EMBL" id="AF480918">
    <property type="protein sequence ID" value="AAM00648.1"/>
    <property type="molecule type" value="Genomic_DNA"/>
</dbReference>
<dbReference type="RefSeq" id="WP_010946234.1">
    <property type="nucleotide sequence ID" value="NZ_UGOV01000002.1"/>
</dbReference>
<dbReference type="PDB" id="6BS7">
    <property type="method" value="X-ray"/>
    <property type="resolution" value="1.95 A"/>
    <property type="chains" value="A=1-431"/>
</dbReference>
<dbReference type="PDB" id="6C25">
    <property type="method" value="X-ray"/>
    <property type="resolution" value="1.90 A"/>
    <property type="chains" value="A=1-431"/>
</dbReference>
<dbReference type="PDBsum" id="6BS7"/>
<dbReference type="PDBsum" id="6C25"/>
<dbReference type="SMR" id="Q8RNM2"/>
<dbReference type="STRING" id="91892.BIZ52_02695"/>
<dbReference type="eggNOG" id="COG0104">
    <property type="taxonomic scope" value="Bacteria"/>
</dbReference>
<dbReference type="UniPathway" id="UPA00075">
    <property type="reaction ID" value="UER00335"/>
</dbReference>
<dbReference type="GO" id="GO:0005737">
    <property type="term" value="C:cytoplasm"/>
    <property type="evidence" value="ECO:0007669"/>
    <property type="project" value="UniProtKB-SubCell"/>
</dbReference>
<dbReference type="GO" id="GO:0004019">
    <property type="term" value="F:adenylosuccinate synthase activity"/>
    <property type="evidence" value="ECO:0007669"/>
    <property type="project" value="UniProtKB-UniRule"/>
</dbReference>
<dbReference type="GO" id="GO:0005525">
    <property type="term" value="F:GTP binding"/>
    <property type="evidence" value="ECO:0007669"/>
    <property type="project" value="UniProtKB-UniRule"/>
</dbReference>
<dbReference type="GO" id="GO:0000287">
    <property type="term" value="F:magnesium ion binding"/>
    <property type="evidence" value="ECO:0007669"/>
    <property type="project" value="UniProtKB-UniRule"/>
</dbReference>
<dbReference type="GO" id="GO:0044208">
    <property type="term" value="P:'de novo' AMP biosynthetic process"/>
    <property type="evidence" value="ECO:0007669"/>
    <property type="project" value="UniProtKB-UniRule"/>
</dbReference>
<dbReference type="GO" id="GO:0046040">
    <property type="term" value="P:IMP metabolic process"/>
    <property type="evidence" value="ECO:0007669"/>
    <property type="project" value="TreeGrafter"/>
</dbReference>
<dbReference type="CDD" id="cd03108">
    <property type="entry name" value="AdSS"/>
    <property type="match status" value="1"/>
</dbReference>
<dbReference type="FunFam" id="1.10.300.10:FF:000001">
    <property type="entry name" value="Adenylosuccinate synthetase"/>
    <property type="match status" value="1"/>
</dbReference>
<dbReference type="FunFam" id="3.90.170.10:FF:000001">
    <property type="entry name" value="Adenylosuccinate synthetase"/>
    <property type="match status" value="1"/>
</dbReference>
<dbReference type="Gene3D" id="3.40.440.10">
    <property type="entry name" value="Adenylosuccinate Synthetase, subunit A, domain 1"/>
    <property type="match status" value="1"/>
</dbReference>
<dbReference type="Gene3D" id="1.10.300.10">
    <property type="entry name" value="Adenylosuccinate Synthetase, subunit A, domain 2"/>
    <property type="match status" value="1"/>
</dbReference>
<dbReference type="Gene3D" id="3.90.170.10">
    <property type="entry name" value="Adenylosuccinate Synthetase, subunit A, domain 3"/>
    <property type="match status" value="1"/>
</dbReference>
<dbReference type="HAMAP" id="MF_00011">
    <property type="entry name" value="Adenylosucc_synth"/>
    <property type="match status" value="1"/>
</dbReference>
<dbReference type="InterPro" id="IPR018220">
    <property type="entry name" value="Adenylosuccin_syn_GTP-bd"/>
</dbReference>
<dbReference type="InterPro" id="IPR033128">
    <property type="entry name" value="Adenylosuccin_syn_Lys_AS"/>
</dbReference>
<dbReference type="InterPro" id="IPR042109">
    <property type="entry name" value="Adenylosuccinate_synth_dom1"/>
</dbReference>
<dbReference type="InterPro" id="IPR042110">
    <property type="entry name" value="Adenylosuccinate_synth_dom2"/>
</dbReference>
<dbReference type="InterPro" id="IPR042111">
    <property type="entry name" value="Adenylosuccinate_synth_dom3"/>
</dbReference>
<dbReference type="InterPro" id="IPR001114">
    <property type="entry name" value="Adenylosuccinate_synthetase"/>
</dbReference>
<dbReference type="InterPro" id="IPR027417">
    <property type="entry name" value="P-loop_NTPase"/>
</dbReference>
<dbReference type="NCBIfam" id="NF002223">
    <property type="entry name" value="PRK01117.1"/>
    <property type="match status" value="1"/>
</dbReference>
<dbReference type="NCBIfam" id="TIGR00184">
    <property type="entry name" value="purA"/>
    <property type="match status" value="1"/>
</dbReference>
<dbReference type="PANTHER" id="PTHR11846">
    <property type="entry name" value="ADENYLOSUCCINATE SYNTHETASE"/>
    <property type="match status" value="1"/>
</dbReference>
<dbReference type="PANTHER" id="PTHR11846:SF0">
    <property type="entry name" value="ADENYLOSUCCINATE SYNTHETASE"/>
    <property type="match status" value="1"/>
</dbReference>
<dbReference type="Pfam" id="PF00709">
    <property type="entry name" value="Adenylsucc_synt"/>
    <property type="match status" value="1"/>
</dbReference>
<dbReference type="SMART" id="SM00788">
    <property type="entry name" value="Adenylsucc_synt"/>
    <property type="match status" value="1"/>
</dbReference>
<dbReference type="SUPFAM" id="SSF52540">
    <property type="entry name" value="P-loop containing nucleoside triphosphate hydrolases"/>
    <property type="match status" value="1"/>
</dbReference>
<dbReference type="PROSITE" id="PS01266">
    <property type="entry name" value="ADENYLOSUCCIN_SYN_1"/>
    <property type="match status" value="1"/>
</dbReference>
<dbReference type="PROSITE" id="PS00513">
    <property type="entry name" value="ADENYLOSUCCIN_SYN_2"/>
    <property type="match status" value="1"/>
</dbReference>
<sequence length="431" mass="47381">MGKNVVVLGTQWGDEGKGKIVDLLTQDAQVVVRYQGGHNAGHTLKINGVKTVLRLIPSGMLRPNVTCYIANGVVLSPQALLSEIKELEGNGINVRERLRISLACPLILPYHIALDKARETHMGKSAIGTTGRGIGPAYEDKVARRALRVGDLFHRDRFANKLTELLDYHNFVLTQYFKQPAVDLESLLGESLQWAEELRPMVCDVSACLHEHRKQGENILFEGAQGVYLDIDHGTYPYVTSSNTCVGSVINGAGFGPRYIDYVLGITKAYTTRVGGGPFPTELLDDVGKRIAERGQEFGAVTGRPRRCGWFDAVLLKRSIELNSISGLCVTKLDVLDGLEVLRIAVAYKDRDGNILSRPPLAADDFNDLLPVYEELPGWQESTADVTVMSDLPANARAYLKRIEEILGIPIDMLSTGPERDSTITLRGPFL</sequence>
<name>PURA_LEGPN</name>